<gene>
    <name type="primary">SCM-1</name>
</gene>
<organism>
    <name type="scientific">Schistosoma mansoni</name>
    <name type="common">Blood fluke</name>
    <dbReference type="NCBI Taxonomy" id="6183"/>
    <lineage>
        <taxon>Eukaryota</taxon>
        <taxon>Metazoa</taxon>
        <taxon>Spiralia</taxon>
        <taxon>Lophotrochozoa</taxon>
        <taxon>Platyhelminthes</taxon>
        <taxon>Trematoda</taxon>
        <taxon>Digenea</taxon>
        <taxon>Strigeidida</taxon>
        <taxon>Schistosomatoidea</taxon>
        <taxon>Schistosomatidae</taxon>
        <taxon>Schistosoma</taxon>
    </lineage>
</organism>
<reference key="1">
    <citation type="journal article" date="1992" name="Mol. Biochem. Parasitol.">
        <title>Ferritins of Schistosoma mansoni: sequence comparison and expression in female and male worms.</title>
        <authorList>
            <person name="Dietzel J."/>
            <person name="Hirzmann J."/>
            <person name="Preis D."/>
            <person name="Symmons P."/>
            <person name="Kunz W."/>
        </authorList>
    </citation>
    <scope>NUCLEOTIDE SEQUENCE [MRNA]</scope>
</reference>
<protein>
    <recommendedName>
        <fullName>Ferritin-1 heavy chain</fullName>
        <ecNumber>1.16.3.1</ecNumber>
    </recommendedName>
</protein>
<proteinExistence type="evidence at transcript level"/>
<name>FRIH1_SCHMA</name>
<feature type="chain" id="PRO_0000201082" description="Ferritin-1 heavy chain">
    <location>
        <begin position="1"/>
        <end position="173"/>
    </location>
</feature>
<feature type="domain" description="Ferritin-like diiron" evidence="2">
    <location>
        <begin position="6"/>
        <end position="155"/>
    </location>
</feature>
<feature type="binding site" evidence="2">
    <location>
        <position position="23"/>
    </location>
    <ligand>
        <name>Fe cation</name>
        <dbReference type="ChEBI" id="CHEBI:24875"/>
        <label>1</label>
    </ligand>
</feature>
<feature type="binding site" evidence="2">
    <location>
        <position position="58"/>
    </location>
    <ligand>
        <name>Fe cation</name>
        <dbReference type="ChEBI" id="CHEBI:24875"/>
        <label>1</label>
    </ligand>
</feature>
<feature type="binding site" evidence="2">
    <location>
        <position position="58"/>
    </location>
    <ligand>
        <name>Fe cation</name>
        <dbReference type="ChEBI" id="CHEBI:24875"/>
        <label>2</label>
    </ligand>
</feature>
<feature type="binding site" evidence="2">
    <location>
        <position position="61"/>
    </location>
    <ligand>
        <name>Fe cation</name>
        <dbReference type="ChEBI" id="CHEBI:24875"/>
        <label>1</label>
    </ligand>
</feature>
<feature type="binding site" evidence="2">
    <location>
        <position position="103"/>
    </location>
    <ligand>
        <name>Fe cation</name>
        <dbReference type="ChEBI" id="CHEBI:24875"/>
        <label>2</label>
    </ligand>
</feature>
<feature type="binding site" evidence="2">
    <location>
        <position position="137"/>
    </location>
    <ligand>
        <name>Fe cation</name>
        <dbReference type="ChEBI" id="CHEBI:24875"/>
        <label>2</label>
    </ligand>
</feature>
<dbReference type="EC" id="1.16.3.1"/>
<dbReference type="EMBL" id="M64538">
    <property type="protein sequence ID" value="AAA29880.1"/>
    <property type="molecule type" value="mRNA"/>
</dbReference>
<dbReference type="PIR" id="B45628">
    <property type="entry name" value="B45628"/>
</dbReference>
<dbReference type="RefSeq" id="XP_018645099.1">
    <property type="nucleotide sequence ID" value="XM_018791779.1"/>
</dbReference>
<dbReference type="SMR" id="P25319"/>
<dbReference type="STRING" id="6183.P25319"/>
<dbReference type="EnsemblMetazoa" id="Smp_087760.1">
    <property type="protein sequence ID" value="Smp_087760.1"/>
    <property type="gene ID" value="Smp_087760"/>
</dbReference>
<dbReference type="KEGG" id="smm:Smp_087760"/>
<dbReference type="WBParaSite" id="Smp_087760.1">
    <property type="protein sequence ID" value="Smp_087760.1"/>
    <property type="gene ID" value="Smp_087760"/>
</dbReference>
<dbReference type="CTD" id="8355419"/>
<dbReference type="eggNOG" id="KOG2332">
    <property type="taxonomic scope" value="Eukaryota"/>
</dbReference>
<dbReference type="HOGENOM" id="CLU_065681_4_0_1"/>
<dbReference type="InParanoid" id="P25319"/>
<dbReference type="OMA" id="WNSAKDA"/>
<dbReference type="OrthoDB" id="186462at2759"/>
<dbReference type="PhylomeDB" id="P25319"/>
<dbReference type="Proteomes" id="UP000008854">
    <property type="component" value="Unassembled WGS sequence"/>
</dbReference>
<dbReference type="GO" id="GO:0005737">
    <property type="term" value="C:cytoplasm"/>
    <property type="evidence" value="ECO:0007669"/>
    <property type="project" value="TreeGrafter"/>
</dbReference>
<dbReference type="GO" id="GO:0008199">
    <property type="term" value="F:ferric iron binding"/>
    <property type="evidence" value="ECO:0007669"/>
    <property type="project" value="InterPro"/>
</dbReference>
<dbReference type="GO" id="GO:0008198">
    <property type="term" value="F:ferrous iron binding"/>
    <property type="evidence" value="ECO:0007669"/>
    <property type="project" value="TreeGrafter"/>
</dbReference>
<dbReference type="GO" id="GO:0004322">
    <property type="term" value="F:ferroxidase activity"/>
    <property type="evidence" value="ECO:0007669"/>
    <property type="project" value="UniProtKB-EC"/>
</dbReference>
<dbReference type="GO" id="GO:0006879">
    <property type="term" value="P:intracellular iron ion homeostasis"/>
    <property type="evidence" value="ECO:0007669"/>
    <property type="project" value="UniProtKB-KW"/>
</dbReference>
<dbReference type="GO" id="GO:0006826">
    <property type="term" value="P:iron ion transport"/>
    <property type="evidence" value="ECO:0007669"/>
    <property type="project" value="InterPro"/>
</dbReference>
<dbReference type="CDD" id="cd01056">
    <property type="entry name" value="Euk_Ferritin"/>
    <property type="match status" value="1"/>
</dbReference>
<dbReference type="FunFam" id="1.20.1260.10:FF:000002">
    <property type="entry name" value="Ferritin, mitochondrial"/>
    <property type="match status" value="1"/>
</dbReference>
<dbReference type="Gene3D" id="1.20.1260.10">
    <property type="match status" value="1"/>
</dbReference>
<dbReference type="InterPro" id="IPR001519">
    <property type="entry name" value="Ferritin"/>
</dbReference>
<dbReference type="InterPro" id="IPR012347">
    <property type="entry name" value="Ferritin-like"/>
</dbReference>
<dbReference type="InterPro" id="IPR009040">
    <property type="entry name" value="Ferritin-like_diiron"/>
</dbReference>
<dbReference type="InterPro" id="IPR009078">
    <property type="entry name" value="Ferritin-like_SF"/>
</dbReference>
<dbReference type="InterPro" id="IPR014034">
    <property type="entry name" value="Ferritin_CS"/>
</dbReference>
<dbReference type="InterPro" id="IPR008331">
    <property type="entry name" value="Ferritin_DPS_dom"/>
</dbReference>
<dbReference type="PANTHER" id="PTHR11431">
    <property type="entry name" value="FERRITIN"/>
    <property type="match status" value="1"/>
</dbReference>
<dbReference type="PANTHER" id="PTHR11431:SF75">
    <property type="entry name" value="FERRITIN"/>
    <property type="match status" value="1"/>
</dbReference>
<dbReference type="Pfam" id="PF00210">
    <property type="entry name" value="Ferritin"/>
    <property type="match status" value="1"/>
</dbReference>
<dbReference type="SUPFAM" id="SSF47240">
    <property type="entry name" value="Ferritin-like"/>
    <property type="match status" value="1"/>
</dbReference>
<dbReference type="PROSITE" id="PS00204">
    <property type="entry name" value="FERRITIN_2"/>
    <property type="match status" value="1"/>
</dbReference>
<dbReference type="PROSITE" id="PS50905">
    <property type="entry name" value="FERRITIN_LIKE"/>
    <property type="match status" value="1"/>
</dbReference>
<evidence type="ECO:0000250" key="1"/>
<evidence type="ECO:0000255" key="2">
    <source>
        <dbReference type="PROSITE-ProRule" id="PRU00085"/>
    </source>
</evidence>
<evidence type="ECO:0000305" key="3"/>
<accession>P25319</accession>
<sequence length="173" mass="20173">MSLCRQNYHEECEAGVNKQINMELYASYVYMTMAFHFNRDDVALNGFYKFFLNESEEERQHAIKLMTYQNMRGGRIVLQDISAPPQLSWNSGLHAMQDALDLEKKVNQSLMELVAVGERHRDTHFCDFINNEYLEIQVQSMKKLSDYITNLIRVGNGLGEYTFDKETLHGESQ</sequence>
<keyword id="KW-0408">Iron</keyword>
<keyword id="KW-0409">Iron storage</keyword>
<keyword id="KW-0479">Metal-binding</keyword>
<keyword id="KW-0560">Oxidoreductase</keyword>
<keyword id="KW-1185">Reference proteome</keyword>
<comment type="function">
    <text evidence="1">Stores iron in a soluble, non-toxic, readily available form. Important for iron homeostasis. Has ferroxidase activity. Iron is taken up in the ferrous form and deposited as ferric hydroxides after oxidation (By similarity).</text>
</comment>
<comment type="catalytic activity">
    <reaction>
        <text>4 Fe(2+) + O2 + 4 H(+) = 4 Fe(3+) + 2 H2O</text>
        <dbReference type="Rhea" id="RHEA:11148"/>
        <dbReference type="ChEBI" id="CHEBI:15377"/>
        <dbReference type="ChEBI" id="CHEBI:15378"/>
        <dbReference type="ChEBI" id="CHEBI:15379"/>
        <dbReference type="ChEBI" id="CHEBI:29033"/>
        <dbReference type="ChEBI" id="CHEBI:29034"/>
        <dbReference type="EC" id="1.16.3.1"/>
    </reaction>
</comment>
<comment type="subunit">
    <text evidence="1">Oligomer of 24 subunits. The functional molecule forms a roughly spherical shell with a diameter of 12 nm and contains a central cavity into which the insoluble mineral iron core is deposited (By similarity).</text>
</comment>
<comment type="similarity">
    <text evidence="3">Belongs to the ferritin family.</text>
</comment>